<proteinExistence type="evidence at transcript level"/>
<keyword id="KW-1015">Disulfide bond</keyword>
<keyword id="KW-0325">Glycoprotein</keyword>
<keyword id="KW-0391">Immunity</keyword>
<keyword id="KW-0393">Immunoglobulin domain</keyword>
<keyword id="KW-0399">Innate immunity</keyword>
<keyword id="KW-0677">Repeat</keyword>
<keyword id="KW-0964">Secreted</keyword>
<keyword id="KW-0732">Signal</keyword>
<comment type="function">
    <text evidence="5">Insect-immune protein with antimicrobial activity (PubMed:16731347). Forms a protein complex at the bacterial surface. Can inhibit hemocyte aggregation.</text>
</comment>
<comment type="subcellular location">
    <subcellularLocation>
        <location evidence="5">Secreted</location>
    </subcellularLocation>
</comment>
<comment type="tissue specificity">
    <text evidence="7">Hemolymph.</text>
</comment>
<comment type="developmental stage">
    <text evidence="3 4 5">Expressed in fat body of fifth instar larvae after bacterial challenge (PubMed:12706633, PubMed:16731347). Expressed in naive 2 hour (precellular blastoderm stage) and 24 hour (predorsal closure stage) eggs (PubMed:14728663).</text>
</comment>
<comment type="induction">
    <text evidence="3 4 5">By bacterial infection.</text>
</comment>
<comment type="disruption phenotype">
    <text evidence="5">Silencing by small interfering RNA (siRNA) leads to reduced protective effect conferred by non-pathogenic E.coli infection prior the subsequent infection by lethal and highly virulent pathogen Photorhabdus luminescens TT01. Speeds the rate at which insects die after the pathogen infection.</text>
</comment>
<comment type="similarity">
    <text evidence="6">Belongs to the hemolin family.</text>
</comment>
<dbReference type="EMBL" id="M64346">
    <property type="protein sequence ID" value="AAA20148.1"/>
    <property type="molecule type" value="mRNA"/>
</dbReference>
<dbReference type="SMR" id="P31398"/>
<dbReference type="OrthoDB" id="6244967at2759"/>
<dbReference type="GO" id="GO:0030424">
    <property type="term" value="C:axon"/>
    <property type="evidence" value="ECO:0007669"/>
    <property type="project" value="TreeGrafter"/>
</dbReference>
<dbReference type="GO" id="GO:0005615">
    <property type="term" value="C:extracellular space"/>
    <property type="evidence" value="ECO:0000314"/>
    <property type="project" value="UniProtKB"/>
</dbReference>
<dbReference type="GO" id="GO:0043025">
    <property type="term" value="C:neuronal cell body"/>
    <property type="evidence" value="ECO:0007669"/>
    <property type="project" value="TreeGrafter"/>
</dbReference>
<dbReference type="GO" id="GO:0005886">
    <property type="term" value="C:plasma membrane"/>
    <property type="evidence" value="ECO:0007669"/>
    <property type="project" value="TreeGrafter"/>
</dbReference>
<dbReference type="GO" id="GO:0008046">
    <property type="term" value="F:axon guidance receptor activity"/>
    <property type="evidence" value="ECO:0007669"/>
    <property type="project" value="TreeGrafter"/>
</dbReference>
<dbReference type="GO" id="GO:0050829">
    <property type="term" value="P:defense response to Gram-negative bacterium"/>
    <property type="evidence" value="ECO:0000315"/>
    <property type="project" value="UniProtKB"/>
</dbReference>
<dbReference type="GO" id="GO:0007156">
    <property type="term" value="P:homophilic cell adhesion via plasma membrane adhesion molecules"/>
    <property type="evidence" value="ECO:0007669"/>
    <property type="project" value="TreeGrafter"/>
</dbReference>
<dbReference type="GO" id="GO:0006955">
    <property type="term" value="P:immune response"/>
    <property type="evidence" value="ECO:0000315"/>
    <property type="project" value="UniProtKB"/>
</dbReference>
<dbReference type="GO" id="GO:0045087">
    <property type="term" value="P:innate immune response"/>
    <property type="evidence" value="ECO:0007669"/>
    <property type="project" value="UniProtKB-KW"/>
</dbReference>
<dbReference type="GO" id="GO:0009617">
    <property type="term" value="P:response to bacterium"/>
    <property type="evidence" value="ECO:0000270"/>
    <property type="project" value="UniProtKB"/>
</dbReference>
<dbReference type="GO" id="GO:0050808">
    <property type="term" value="P:synapse organization"/>
    <property type="evidence" value="ECO:0007669"/>
    <property type="project" value="TreeGrafter"/>
</dbReference>
<dbReference type="CDD" id="cd20979">
    <property type="entry name" value="IgI_1_hemolin-like"/>
    <property type="match status" value="1"/>
</dbReference>
<dbReference type="CDD" id="cd20965">
    <property type="entry name" value="IgI_2_hemolin-like"/>
    <property type="match status" value="1"/>
</dbReference>
<dbReference type="FunFam" id="2.60.40.10:FF:000032">
    <property type="entry name" value="palladin isoform X1"/>
    <property type="match status" value="1"/>
</dbReference>
<dbReference type="Gene3D" id="2.60.40.10">
    <property type="entry name" value="Immunoglobulins"/>
    <property type="match status" value="4"/>
</dbReference>
<dbReference type="InterPro" id="IPR050958">
    <property type="entry name" value="Cell_Adh-Cytoskel_Orgn"/>
</dbReference>
<dbReference type="InterPro" id="IPR007110">
    <property type="entry name" value="Ig-like_dom"/>
</dbReference>
<dbReference type="InterPro" id="IPR036179">
    <property type="entry name" value="Ig-like_dom_sf"/>
</dbReference>
<dbReference type="InterPro" id="IPR013783">
    <property type="entry name" value="Ig-like_fold"/>
</dbReference>
<dbReference type="InterPro" id="IPR013098">
    <property type="entry name" value="Ig_I-set"/>
</dbReference>
<dbReference type="InterPro" id="IPR003599">
    <property type="entry name" value="Ig_sub"/>
</dbReference>
<dbReference type="InterPro" id="IPR003598">
    <property type="entry name" value="Ig_sub2"/>
</dbReference>
<dbReference type="PANTHER" id="PTHR45080">
    <property type="entry name" value="CONTACTIN 5"/>
    <property type="match status" value="1"/>
</dbReference>
<dbReference type="PANTHER" id="PTHR45080:SF8">
    <property type="entry name" value="IG-LIKE DOMAIN-CONTAINING PROTEIN"/>
    <property type="match status" value="1"/>
</dbReference>
<dbReference type="Pfam" id="PF07679">
    <property type="entry name" value="I-set"/>
    <property type="match status" value="3"/>
</dbReference>
<dbReference type="SMART" id="SM00409">
    <property type="entry name" value="IG"/>
    <property type="match status" value="4"/>
</dbReference>
<dbReference type="SMART" id="SM00408">
    <property type="entry name" value="IGc2"/>
    <property type="match status" value="4"/>
</dbReference>
<dbReference type="SUPFAM" id="SSF48726">
    <property type="entry name" value="Immunoglobulin"/>
    <property type="match status" value="4"/>
</dbReference>
<dbReference type="PROSITE" id="PS50835">
    <property type="entry name" value="IG_LIKE"/>
    <property type="match status" value="4"/>
</dbReference>
<evidence type="ECO:0000250" key="1">
    <source>
        <dbReference type="UniProtKB" id="P25033"/>
    </source>
</evidence>
<evidence type="ECO:0000255" key="2"/>
<evidence type="ECO:0000269" key="3">
    <source>
    </source>
</evidence>
<evidence type="ECO:0000269" key="4">
    <source>
    </source>
</evidence>
<evidence type="ECO:0000269" key="5">
    <source>
    </source>
</evidence>
<evidence type="ECO:0000305" key="6"/>
<evidence type="ECO:0000305" key="7">
    <source>
    </source>
</evidence>
<name>HEMO_MANSE</name>
<organism>
    <name type="scientific">Manduca sexta</name>
    <name type="common">Tobacco hawkmoth</name>
    <name type="synonym">Tobacco hornworm</name>
    <dbReference type="NCBI Taxonomy" id="7130"/>
    <lineage>
        <taxon>Eukaryota</taxon>
        <taxon>Metazoa</taxon>
        <taxon>Ecdysozoa</taxon>
        <taxon>Arthropoda</taxon>
        <taxon>Hexapoda</taxon>
        <taxon>Insecta</taxon>
        <taxon>Pterygota</taxon>
        <taxon>Neoptera</taxon>
        <taxon>Endopterygota</taxon>
        <taxon>Lepidoptera</taxon>
        <taxon>Glossata</taxon>
        <taxon>Ditrysia</taxon>
        <taxon>Bombycoidea</taxon>
        <taxon>Sphingidae</taxon>
        <taxon>Sphinginae</taxon>
        <taxon>Sphingini</taxon>
        <taxon>Manduca</taxon>
    </lineage>
</organism>
<accession>P31398</accession>
<sequence>MVSKSIVALAACVAMCVAQPVEKMPVLKDQPAEVLFRESQATVLECVTENGDKDVKYSWQKDGKEFKWQEHNIAQRKDEGSLVFLKPEAKDEGQYRCFAESAAGVATSHIISFRRTYMVVPTTFKTVEKKPVEGSWLKLECSIPEGYPKPTIVWRKQLGEDESIADSILARRITQSPEGDLYFTSVEKEDVSESYKYVCAAKSPAIDGDVPLVGYTIKSLEKNTNQKNGELVPMYVSNDMIAKAGDVTMIYCMYGGVPMAYPNWFKDGKDVNGKPSDRITRHNRTSGKRLFIKETLLEDQGTFTCDVNNEVGKPQKHSVKLTVVSGPRFTKKPEKQVIAKQGQDFVIPCEVSALPAAPVSWTFNAKPISGSRVVASPSGLTIKGIQKSDKGYYGCQAHNEHGDAYAETLVIVA</sequence>
<protein>
    <recommendedName>
        <fullName>Hemolin</fullName>
    </recommendedName>
    <alternativeName>
        <fullName>Hemocyte aggregation inhibitor</fullName>
    </alternativeName>
    <alternativeName>
        <fullName>Protein P4</fullName>
    </alternativeName>
</protein>
<feature type="signal peptide" evidence="2">
    <location>
        <begin position="1"/>
        <end position="18"/>
    </location>
</feature>
<feature type="chain" id="PRO_0000014773" description="Hemolin">
    <location>
        <begin position="19"/>
        <end position="413"/>
    </location>
</feature>
<feature type="domain" description="Ig-like C2-type 1">
    <location>
        <begin position="25"/>
        <end position="112"/>
    </location>
</feature>
<feature type="domain" description="Ig-like C2-type 2">
    <location>
        <begin position="121"/>
        <end position="215"/>
    </location>
</feature>
<feature type="domain" description="Ig-like C2-type 3">
    <location>
        <begin position="233"/>
        <end position="322"/>
    </location>
</feature>
<feature type="domain" description="Ig-like C2-type 4">
    <location>
        <begin position="327"/>
        <end position="411"/>
    </location>
</feature>
<feature type="glycosylation site" description="N-linked (GlcNAc...) asparagine" evidence="2">
    <location>
        <position position="283"/>
    </location>
</feature>
<feature type="disulfide bond" evidence="1">
    <location>
        <begin position="46"/>
        <end position="97"/>
    </location>
</feature>
<feature type="disulfide bond" evidence="1">
    <location>
        <begin position="141"/>
        <end position="199"/>
    </location>
</feature>
<feature type="disulfide bond" evidence="1">
    <location>
        <begin position="252"/>
        <end position="305"/>
    </location>
</feature>
<feature type="disulfide bond" evidence="1">
    <location>
        <begin position="349"/>
        <end position="395"/>
    </location>
</feature>
<reference key="1">
    <citation type="journal article" date="1991" name="Arch. Insect Biochem. Physiol.">
        <title>Bacteria-induced protein P4 (hemolin) from Manduca sexta: a member of the immunoglobulin superfamily which can inhibit hemocyte aggregation.</title>
        <authorList>
            <person name="Ladendorff N.E."/>
            <person name="Kanost M.R."/>
        </authorList>
    </citation>
    <scope>NUCLEOTIDE SEQUENCE [MRNA]</scope>
    <source>
        <tissue>Fat body</tissue>
    </source>
</reference>
<reference key="2">
    <citation type="submission" date="1992-05" db="EMBL/GenBank/DDBJ databases">
        <authorList>
            <person name="Kanost M.R."/>
        </authorList>
    </citation>
    <scope>SEQUENCE REVISION</scope>
</reference>
<reference key="3">
    <citation type="journal article" date="2003" name="Insect Biochem. Mol. Biol.">
        <title>Identification by subtractive suppression hybridization of bacteria-induced genes expressed in Manduca sexta fat body.</title>
        <authorList>
            <person name="Zhu Y."/>
            <person name="Johnson T.J."/>
            <person name="Myers A.A."/>
            <person name="Kanost M.R."/>
        </authorList>
    </citation>
    <scope>DEVELOPMENTAL STAGE</scope>
    <scope>INDUCTION</scope>
</reference>
<reference key="4">
    <citation type="journal article" date="2004" name="Insect Mol. Biol.">
        <title>Bacterial challenge stimulates innate immune responses in extra-embryonic tissues of tobacco hornworm eggs.</title>
        <authorList>
            <person name="Gorman M.J."/>
            <person name="Kankanala P."/>
            <person name="Kanost M.R."/>
        </authorList>
    </citation>
    <scope>DEVELOPMENTAL STAGE</scope>
    <scope>INDUCTION</scope>
</reference>
<reference key="5">
    <citation type="journal article" date="2006" name="Insect Biochem. Mol. Biol.">
        <title>Prior infection of Manduca sexta with non-pathogenic Escherichia coli elicits immunity to pathogenic Photorhabdus luminescens: roles of immune-related proteins shown by RNA interference.</title>
        <authorList>
            <person name="Eleftherianos I."/>
            <person name="Marokhazi J."/>
            <person name="Millichap P.J."/>
            <person name="Hodgkinson A.J."/>
            <person name="Sriboonlert A."/>
            <person name="ffrench-Constant R.H."/>
            <person name="Reynolds S.E."/>
        </authorList>
    </citation>
    <scope>FUNCTION</scope>
    <scope>SUBCELLULAR LOCATION</scope>
    <scope>TISSUE SPECIFICITY</scope>
    <scope>DEVELOPMENTAL STAGE</scope>
    <scope>INDUCTION</scope>
    <scope>DISRUPTION PHENOTYPE</scope>
</reference>